<feature type="signal peptide" evidence="2">
    <location>
        <begin position="1"/>
        <end position="21"/>
    </location>
</feature>
<feature type="chain" id="PRO_0000367331" description="GDSL esterase/lipase EXL4">
    <location>
        <begin position="22"/>
        <end position="343"/>
    </location>
</feature>
<feature type="active site" description="Nucleophile" evidence="1">
    <location>
        <position position="35"/>
    </location>
</feature>
<feature type="active site" evidence="1">
    <location>
        <position position="318"/>
    </location>
</feature>
<feature type="active site" evidence="1">
    <location>
        <position position="321"/>
    </location>
</feature>
<feature type="glycosylation site" description="N-linked (GlcNAc...) asparagine" evidence="2">
    <location>
        <position position="23"/>
    </location>
</feature>
<feature type="sequence conflict" description="In Ref. 1; AAK30019." evidence="5" ref="1">
    <location>
        <begin position="21"/>
        <end position="23"/>
    </location>
</feature>
<proteinExistence type="evidence at protein level"/>
<gene>
    <name type="primary">EXL4</name>
    <name type="ordered locus">At1g75910</name>
    <name type="ORF">T4O12.250</name>
</gene>
<protein>
    <recommendedName>
        <fullName>GDSL esterase/lipase EXL4</fullName>
        <ecNumber>3.1.1.-</ecNumber>
    </recommendedName>
    <alternativeName>
        <fullName>Family II extracellular lipase 4</fullName>
        <shortName>Family II lipase EXL4</shortName>
    </alternativeName>
</protein>
<dbReference type="EC" id="3.1.1.-"/>
<dbReference type="EMBL" id="AY028612">
    <property type="protein sequence ID" value="AAK30019.1"/>
    <property type="molecule type" value="mRNA"/>
</dbReference>
<dbReference type="EMBL" id="AC007396">
    <property type="protein sequence ID" value="AAF79815.1"/>
    <property type="status" value="ALT_SEQ"/>
    <property type="molecule type" value="Genomic_DNA"/>
</dbReference>
<dbReference type="EMBL" id="CP002684">
    <property type="protein sequence ID" value="AEE35773.1"/>
    <property type="molecule type" value="Genomic_DNA"/>
</dbReference>
<dbReference type="EMBL" id="AK227028">
    <property type="protein sequence ID" value="BAE99091.1"/>
    <property type="molecule type" value="mRNA"/>
</dbReference>
<dbReference type="PIR" id="A96788">
    <property type="entry name" value="A96788"/>
</dbReference>
<dbReference type="RefSeq" id="NP_177719.1">
    <property type="nucleotide sequence ID" value="NM_106241.3"/>
</dbReference>
<dbReference type="SMR" id="Q0WUV7"/>
<dbReference type="FunCoup" id="Q0WUV7">
    <property type="interactions" value="93"/>
</dbReference>
<dbReference type="STRING" id="3702.Q0WUV7"/>
<dbReference type="GlyCosmos" id="Q0WUV7">
    <property type="glycosylation" value="1 site, No reported glycans"/>
</dbReference>
<dbReference type="GlyGen" id="Q0WUV7">
    <property type="glycosylation" value="1 site"/>
</dbReference>
<dbReference type="PaxDb" id="3702-AT1G75910.1"/>
<dbReference type="ProteomicsDB" id="222266"/>
<dbReference type="EnsemblPlants" id="AT1G75910.1">
    <property type="protein sequence ID" value="AT1G75910.1"/>
    <property type="gene ID" value="AT1G75910"/>
</dbReference>
<dbReference type="GeneID" id="843924"/>
<dbReference type="Gramene" id="AT1G75910.1">
    <property type="protein sequence ID" value="AT1G75910.1"/>
    <property type="gene ID" value="AT1G75910"/>
</dbReference>
<dbReference type="KEGG" id="ath:AT1G75910"/>
<dbReference type="Araport" id="AT1G75910"/>
<dbReference type="TAIR" id="AT1G75910">
    <property type="gene designation" value="EXL4"/>
</dbReference>
<dbReference type="HOGENOM" id="CLU_015101_0_1_1"/>
<dbReference type="InParanoid" id="Q0WUV7"/>
<dbReference type="OMA" id="MRANIWP"/>
<dbReference type="OrthoDB" id="1600564at2759"/>
<dbReference type="PhylomeDB" id="Q0WUV7"/>
<dbReference type="BioCyc" id="ARA:AT1G75910-MONOMER"/>
<dbReference type="PRO" id="PR:Q0WUV7"/>
<dbReference type="Proteomes" id="UP000006548">
    <property type="component" value="Chromosome 1"/>
</dbReference>
<dbReference type="ExpressionAtlas" id="Q0WUV7">
    <property type="expression patterns" value="baseline and differential"/>
</dbReference>
<dbReference type="GO" id="GO:0005576">
    <property type="term" value="C:extracellular region"/>
    <property type="evidence" value="ECO:0007669"/>
    <property type="project" value="UniProtKB-KW"/>
</dbReference>
<dbReference type="GO" id="GO:0070505">
    <property type="term" value="C:pollen coat"/>
    <property type="evidence" value="ECO:0007669"/>
    <property type="project" value="UniProtKB-SubCell"/>
</dbReference>
<dbReference type="GO" id="GO:0016298">
    <property type="term" value="F:lipase activity"/>
    <property type="evidence" value="ECO:0000250"/>
    <property type="project" value="TAIR"/>
</dbReference>
<dbReference type="GO" id="GO:0016042">
    <property type="term" value="P:lipid catabolic process"/>
    <property type="evidence" value="ECO:0007669"/>
    <property type="project" value="UniProtKB-KW"/>
</dbReference>
<dbReference type="CDD" id="cd01837">
    <property type="entry name" value="SGNH_plant_lipase_like"/>
    <property type="match status" value="1"/>
</dbReference>
<dbReference type="FunFam" id="3.40.50.1110:FF:000003">
    <property type="entry name" value="GDSL esterase/lipase APG"/>
    <property type="match status" value="1"/>
</dbReference>
<dbReference type="Gene3D" id="3.40.50.1110">
    <property type="entry name" value="SGNH hydrolase"/>
    <property type="match status" value="1"/>
</dbReference>
<dbReference type="InterPro" id="IPR001087">
    <property type="entry name" value="GDSL"/>
</dbReference>
<dbReference type="InterPro" id="IPR050592">
    <property type="entry name" value="GDSL_lipolytic_enzyme"/>
</dbReference>
<dbReference type="InterPro" id="IPR008265">
    <property type="entry name" value="Lipase_GDSL_AS"/>
</dbReference>
<dbReference type="InterPro" id="IPR036514">
    <property type="entry name" value="SGNH_hydro_sf"/>
</dbReference>
<dbReference type="InterPro" id="IPR035669">
    <property type="entry name" value="SGNH_plant_lipase-like"/>
</dbReference>
<dbReference type="PANTHER" id="PTHR45642">
    <property type="entry name" value="GDSL ESTERASE/LIPASE EXL3"/>
    <property type="match status" value="1"/>
</dbReference>
<dbReference type="PANTHER" id="PTHR45642:SF55">
    <property type="entry name" value="GDSL ESTERASE_LIPASE EXL4-RELATED"/>
    <property type="match status" value="1"/>
</dbReference>
<dbReference type="Pfam" id="PF00657">
    <property type="entry name" value="Lipase_GDSL"/>
    <property type="match status" value="1"/>
</dbReference>
<dbReference type="SUPFAM" id="SSF52266">
    <property type="entry name" value="SGNH hydrolase"/>
    <property type="match status" value="1"/>
</dbReference>
<dbReference type="PROSITE" id="PS01098">
    <property type="entry name" value="LIPASE_GDSL_SER"/>
    <property type="match status" value="1"/>
</dbReference>
<comment type="function">
    <text evidence="4">Required for the formation of pollen coats and male fertility.</text>
</comment>
<comment type="subcellular location">
    <subcellularLocation>
        <location evidence="3 4">Secreted</location>
        <location evidence="3 4">Extracellular space</location>
        <location evidence="3 4">Extracellular matrix</location>
        <location evidence="3 4">Pollen coat</location>
    </subcellularLocation>
    <text>Localized in small granules in the tapetal cells.</text>
</comment>
<comment type="tissue specificity">
    <text evidence="3">Flower buds and pollen.</text>
</comment>
<comment type="developmental stage">
    <text evidence="4">Strongly expressed in tapetal cells at the flower developmental stage 10 to middle 12, where the components of pollen coat are synthesized actively.</text>
</comment>
<comment type="disruption phenotype">
    <text evidence="4">Reduced pollen fertility. Pollen grain exhibit a partial formation of coat and impaired water absorption and germination capacities.</text>
</comment>
<comment type="similarity">
    <text evidence="5">Belongs to the 'GDSL' lipolytic enzyme family.</text>
</comment>
<comment type="sequence caution" evidence="5">
    <conflict type="erroneous gene model prediction">
        <sequence resource="EMBL-CDS" id="AAF79815"/>
    </conflict>
    <text>The predicted gene At1g75900 has been split into 2 genes: At1g75900 and At1g75910.</text>
</comment>
<organism>
    <name type="scientific">Arabidopsis thaliana</name>
    <name type="common">Mouse-ear cress</name>
    <dbReference type="NCBI Taxonomy" id="3702"/>
    <lineage>
        <taxon>Eukaryota</taxon>
        <taxon>Viridiplantae</taxon>
        <taxon>Streptophyta</taxon>
        <taxon>Embryophyta</taxon>
        <taxon>Tracheophyta</taxon>
        <taxon>Spermatophyta</taxon>
        <taxon>Magnoliopsida</taxon>
        <taxon>eudicotyledons</taxon>
        <taxon>Gunneridae</taxon>
        <taxon>Pentapetalae</taxon>
        <taxon>rosids</taxon>
        <taxon>malvids</taxon>
        <taxon>Brassicales</taxon>
        <taxon>Brassicaceae</taxon>
        <taxon>Camelineae</taxon>
        <taxon>Arabidopsis</taxon>
    </lineage>
</organism>
<accession>Q0WUV7</accession>
<accession>Q93X95</accession>
<accession>Q9LQS5</accession>
<reference key="1">
    <citation type="journal article" date="2001" name="Science">
        <title>Gene families from the Arabidopsis thaliana pollen coat proteome.</title>
        <authorList>
            <person name="Mayfield J.A."/>
            <person name="Fiebig A."/>
            <person name="Johnstone S.E."/>
            <person name="Preuss D."/>
        </authorList>
    </citation>
    <scope>NUCLEOTIDE SEQUENCE [MRNA]</scope>
    <scope>PROTEIN SEQUENCE OF 22-32; 95-103; 130-141 AND 314-325</scope>
    <scope>SUBCELLULAR LOCATION</scope>
    <scope>TISSUE SPECIFICITY</scope>
    <source>
        <strain>cv. Landsberg erecta</strain>
        <tissue>Pollen</tissue>
    </source>
</reference>
<reference key="2">
    <citation type="journal article" date="2000" name="Nature">
        <title>Sequence and analysis of chromosome 1 of the plant Arabidopsis thaliana.</title>
        <authorList>
            <person name="Theologis A."/>
            <person name="Ecker J.R."/>
            <person name="Palm C.J."/>
            <person name="Federspiel N.A."/>
            <person name="Kaul S."/>
            <person name="White O."/>
            <person name="Alonso J."/>
            <person name="Altafi H."/>
            <person name="Araujo R."/>
            <person name="Bowman C.L."/>
            <person name="Brooks S.Y."/>
            <person name="Buehler E."/>
            <person name="Chan A."/>
            <person name="Chao Q."/>
            <person name="Chen H."/>
            <person name="Cheuk R.F."/>
            <person name="Chin C.W."/>
            <person name="Chung M.K."/>
            <person name="Conn L."/>
            <person name="Conway A.B."/>
            <person name="Conway A.R."/>
            <person name="Creasy T.H."/>
            <person name="Dewar K."/>
            <person name="Dunn P."/>
            <person name="Etgu P."/>
            <person name="Feldblyum T.V."/>
            <person name="Feng J.-D."/>
            <person name="Fong B."/>
            <person name="Fujii C.Y."/>
            <person name="Gill J.E."/>
            <person name="Goldsmith A.D."/>
            <person name="Haas B."/>
            <person name="Hansen N.F."/>
            <person name="Hughes B."/>
            <person name="Huizar L."/>
            <person name="Hunter J.L."/>
            <person name="Jenkins J."/>
            <person name="Johnson-Hopson C."/>
            <person name="Khan S."/>
            <person name="Khaykin E."/>
            <person name="Kim C.J."/>
            <person name="Koo H.L."/>
            <person name="Kremenetskaia I."/>
            <person name="Kurtz D.B."/>
            <person name="Kwan A."/>
            <person name="Lam B."/>
            <person name="Langin-Hooper S."/>
            <person name="Lee A."/>
            <person name="Lee J.M."/>
            <person name="Lenz C.A."/>
            <person name="Li J.H."/>
            <person name="Li Y.-P."/>
            <person name="Lin X."/>
            <person name="Liu S.X."/>
            <person name="Liu Z.A."/>
            <person name="Luros J.S."/>
            <person name="Maiti R."/>
            <person name="Marziali A."/>
            <person name="Militscher J."/>
            <person name="Miranda M."/>
            <person name="Nguyen M."/>
            <person name="Nierman W.C."/>
            <person name="Osborne B.I."/>
            <person name="Pai G."/>
            <person name="Peterson J."/>
            <person name="Pham P.K."/>
            <person name="Rizzo M."/>
            <person name="Rooney T."/>
            <person name="Rowley D."/>
            <person name="Sakano H."/>
            <person name="Salzberg S.L."/>
            <person name="Schwartz J.R."/>
            <person name="Shinn P."/>
            <person name="Southwick A.M."/>
            <person name="Sun H."/>
            <person name="Tallon L.J."/>
            <person name="Tambunga G."/>
            <person name="Toriumi M.J."/>
            <person name="Town C.D."/>
            <person name="Utterback T."/>
            <person name="Van Aken S."/>
            <person name="Vaysberg M."/>
            <person name="Vysotskaia V.S."/>
            <person name="Walker M."/>
            <person name="Wu D."/>
            <person name="Yu G."/>
            <person name="Fraser C.M."/>
            <person name="Venter J.C."/>
            <person name="Davis R.W."/>
        </authorList>
    </citation>
    <scope>NUCLEOTIDE SEQUENCE [LARGE SCALE GENOMIC DNA]</scope>
    <source>
        <strain>cv. Columbia</strain>
    </source>
</reference>
<reference key="3">
    <citation type="journal article" date="2017" name="Plant J.">
        <title>Araport11: a complete reannotation of the Arabidopsis thaliana reference genome.</title>
        <authorList>
            <person name="Cheng C.Y."/>
            <person name="Krishnakumar V."/>
            <person name="Chan A.P."/>
            <person name="Thibaud-Nissen F."/>
            <person name="Schobel S."/>
            <person name="Town C.D."/>
        </authorList>
    </citation>
    <scope>GENOME REANNOTATION</scope>
    <source>
        <strain>cv. Columbia</strain>
    </source>
</reference>
<reference key="4">
    <citation type="submission" date="2006-07" db="EMBL/GenBank/DDBJ databases">
        <title>Large-scale analysis of RIKEN Arabidopsis full-length (RAFL) cDNAs.</title>
        <authorList>
            <person name="Totoki Y."/>
            <person name="Seki M."/>
            <person name="Ishida J."/>
            <person name="Nakajima M."/>
            <person name="Enju A."/>
            <person name="Kamiya A."/>
            <person name="Narusaka M."/>
            <person name="Shin-i T."/>
            <person name="Nakagawa M."/>
            <person name="Sakamoto N."/>
            <person name="Oishi K."/>
            <person name="Kohara Y."/>
            <person name="Kobayashi M."/>
            <person name="Toyoda A."/>
            <person name="Sakaki Y."/>
            <person name="Sakurai T."/>
            <person name="Iida K."/>
            <person name="Akiyama K."/>
            <person name="Satou M."/>
            <person name="Toyoda T."/>
            <person name="Konagaya A."/>
            <person name="Carninci P."/>
            <person name="Kawai J."/>
            <person name="Hayashizaki Y."/>
            <person name="Shinozaki K."/>
        </authorList>
    </citation>
    <scope>NUCLEOTIDE SEQUENCE [LARGE SCALE MRNA]</scope>
    <source>
        <strain>cv. Columbia</strain>
    </source>
</reference>
<reference key="5">
    <citation type="journal article" date="2004" name="Prog. Lipid Res.">
        <title>GDSL family of serine esterases/lipases.</title>
        <authorList>
            <person name="Akoh C.C."/>
            <person name="Lee G.-C."/>
            <person name="Liaw Y.-C."/>
            <person name="Huang T.-H."/>
            <person name="Shaw J.-F."/>
        </authorList>
    </citation>
    <scope>REVIEW</scope>
</reference>
<reference key="6">
    <citation type="journal article" date="2008" name="Pak. J. Biol. Sci.">
        <title>Sequence analysis of GDSL lipase gene family in Arabidopsis thaliana.</title>
        <authorList>
            <person name="Ling H."/>
        </authorList>
    </citation>
    <scope>GENE FAMILY</scope>
</reference>
<reference key="7">
    <citation type="book" date="2008" name="Proceedings of the 19th international conference on Arabidopsis research">
        <title>Function of Arabidopsis EXL4 and EXL6 to form pollen coats.</title>
        <authorList>
            <person name="Sassa M."/>
            <person name="Saito H."/>
            <person name="Nakamura K."/>
            <person name="Ishiguro S."/>
        </authorList>
    </citation>
    <scope>FUNCTION</scope>
    <scope>DISRUPTION PHENOTYPE</scope>
    <scope>DEVELOPMENTAL STAGE</scope>
    <scope>SUBCELLULAR LOCATION</scope>
</reference>
<name>EXL4_ARATH</name>
<keyword id="KW-0903">Direct protein sequencing</keyword>
<keyword id="KW-0272">Extracellular matrix</keyword>
<keyword id="KW-0325">Glycoprotein</keyword>
<keyword id="KW-0378">Hydrolase</keyword>
<keyword id="KW-0442">Lipid degradation</keyword>
<keyword id="KW-0443">Lipid metabolism</keyword>
<keyword id="KW-1185">Reference proteome</keyword>
<keyword id="KW-0964">Secreted</keyword>
<keyword id="KW-0732">Signal</keyword>
<sequence>MCSKITLVLTLFSSYFISTDAVNGSFPALLAFGDSILDTGNNNFLLTFMKGNIWPYGRSFSMRRATGRFGNGRVFSDIVAEGLGIKKILPAYRKLFNSPSDLRTGVCFASGGAGVDPVTSKLLRVLTPKDQVNDFKGYIRKLKATAGPSRASSIVSNAVILVSQGNNDIGISYFGTPTAAFRGLTPNRYTTKLAGWNKQFMKELYDQGARKFAVMGVIPLGCLPMTRIFLGGFVITCNFFANRVAEQYNGKLRSGTKSWGREAGFRGAKFVYVDMYNTLMDVIKNYRRYGFSNEKNGCCCMITAIIPCPNPDKYVFYDFVHPSEKAYRTISKKLVQDIKNGLA</sequence>
<evidence type="ECO:0000250" key="1"/>
<evidence type="ECO:0000255" key="2"/>
<evidence type="ECO:0000269" key="3">
    <source>
    </source>
</evidence>
<evidence type="ECO:0000269" key="4">
    <source ref="7"/>
</evidence>
<evidence type="ECO:0000305" key="5"/>